<dbReference type="EC" id="2.7.7.6" evidence="1"/>
<dbReference type="EMBL" id="DQ347958">
    <property type="protein sequence ID" value="ABC56204.1"/>
    <property type="status" value="ALT_INIT"/>
    <property type="molecule type" value="Genomic_DNA"/>
</dbReference>
<dbReference type="RefSeq" id="YP_538839.1">
    <property type="nucleotide sequence ID" value="NC_007943.1"/>
</dbReference>
<dbReference type="SMR" id="Q2MIJ6"/>
<dbReference type="GeneID" id="3989542"/>
<dbReference type="GO" id="GO:0009507">
    <property type="term" value="C:chloroplast"/>
    <property type="evidence" value="ECO:0007669"/>
    <property type="project" value="UniProtKB-SubCell"/>
</dbReference>
<dbReference type="GO" id="GO:0000428">
    <property type="term" value="C:DNA-directed RNA polymerase complex"/>
    <property type="evidence" value="ECO:0007669"/>
    <property type="project" value="UniProtKB-KW"/>
</dbReference>
<dbReference type="GO" id="GO:0005739">
    <property type="term" value="C:mitochondrion"/>
    <property type="evidence" value="ECO:0007669"/>
    <property type="project" value="GOC"/>
</dbReference>
<dbReference type="GO" id="GO:0003677">
    <property type="term" value="F:DNA binding"/>
    <property type="evidence" value="ECO:0007669"/>
    <property type="project" value="UniProtKB-UniRule"/>
</dbReference>
<dbReference type="GO" id="GO:0003899">
    <property type="term" value="F:DNA-directed RNA polymerase activity"/>
    <property type="evidence" value="ECO:0007669"/>
    <property type="project" value="UniProtKB-UniRule"/>
</dbReference>
<dbReference type="GO" id="GO:0000287">
    <property type="term" value="F:magnesium ion binding"/>
    <property type="evidence" value="ECO:0007669"/>
    <property type="project" value="UniProtKB-UniRule"/>
</dbReference>
<dbReference type="GO" id="GO:0008270">
    <property type="term" value="F:zinc ion binding"/>
    <property type="evidence" value="ECO:0007669"/>
    <property type="project" value="UniProtKB-UniRule"/>
</dbReference>
<dbReference type="GO" id="GO:0006351">
    <property type="term" value="P:DNA-templated transcription"/>
    <property type="evidence" value="ECO:0007669"/>
    <property type="project" value="UniProtKB-UniRule"/>
</dbReference>
<dbReference type="FunFam" id="1.10.40.90:FF:000002">
    <property type="entry name" value="DNA-directed RNA polymerase subunit"/>
    <property type="match status" value="1"/>
</dbReference>
<dbReference type="FunFam" id="4.10.860.120:FF:000007">
    <property type="entry name" value="DNA-directed RNA polymerase subunit gamma"/>
    <property type="match status" value="1"/>
</dbReference>
<dbReference type="Gene3D" id="1.10.40.90">
    <property type="match status" value="1"/>
</dbReference>
<dbReference type="Gene3D" id="2.40.40.20">
    <property type="match status" value="1"/>
</dbReference>
<dbReference type="Gene3D" id="4.10.860.120">
    <property type="entry name" value="RNA polymerase II, clamp domain"/>
    <property type="match status" value="1"/>
</dbReference>
<dbReference type="Gene3D" id="1.10.274.100">
    <property type="entry name" value="RNA polymerase Rpb1, domain 3"/>
    <property type="match status" value="1"/>
</dbReference>
<dbReference type="HAMAP" id="MF_01323">
    <property type="entry name" value="RNApol_bact_RpoC1"/>
    <property type="match status" value="1"/>
</dbReference>
<dbReference type="InterPro" id="IPR045867">
    <property type="entry name" value="DNA-dir_RpoC_beta_prime"/>
</dbReference>
<dbReference type="InterPro" id="IPR000722">
    <property type="entry name" value="RNA_pol_asu"/>
</dbReference>
<dbReference type="InterPro" id="IPR006592">
    <property type="entry name" value="RNA_pol_N"/>
</dbReference>
<dbReference type="InterPro" id="IPR007080">
    <property type="entry name" value="RNA_pol_Rpb1_1"/>
</dbReference>
<dbReference type="InterPro" id="IPR042102">
    <property type="entry name" value="RNA_pol_Rpb1_3_sf"/>
</dbReference>
<dbReference type="InterPro" id="IPR044893">
    <property type="entry name" value="RNA_pol_Rpb1_clamp_domain"/>
</dbReference>
<dbReference type="InterPro" id="IPR034678">
    <property type="entry name" value="RNApol_RpoC1"/>
</dbReference>
<dbReference type="PANTHER" id="PTHR19376">
    <property type="entry name" value="DNA-DIRECTED RNA POLYMERASE"/>
    <property type="match status" value="1"/>
</dbReference>
<dbReference type="PANTHER" id="PTHR19376:SF54">
    <property type="entry name" value="DNA-DIRECTED RNA POLYMERASE SUBUNIT BETA"/>
    <property type="match status" value="1"/>
</dbReference>
<dbReference type="Pfam" id="PF04997">
    <property type="entry name" value="RNA_pol_Rpb1_1"/>
    <property type="match status" value="1"/>
</dbReference>
<dbReference type="Pfam" id="PF00623">
    <property type="entry name" value="RNA_pol_Rpb1_2"/>
    <property type="match status" value="2"/>
</dbReference>
<dbReference type="SMART" id="SM00663">
    <property type="entry name" value="RPOLA_N"/>
    <property type="match status" value="1"/>
</dbReference>
<dbReference type="SUPFAM" id="SSF64484">
    <property type="entry name" value="beta and beta-prime subunits of DNA dependent RNA-polymerase"/>
    <property type="match status" value="1"/>
</dbReference>
<geneLocation type="chloroplast"/>
<organism>
    <name type="scientific">Solanum bulbocastanum</name>
    <name type="common">Wild potato</name>
    <dbReference type="NCBI Taxonomy" id="147425"/>
    <lineage>
        <taxon>Eukaryota</taxon>
        <taxon>Viridiplantae</taxon>
        <taxon>Streptophyta</taxon>
        <taxon>Embryophyta</taxon>
        <taxon>Tracheophyta</taxon>
        <taxon>Spermatophyta</taxon>
        <taxon>Magnoliopsida</taxon>
        <taxon>eudicotyledons</taxon>
        <taxon>Gunneridae</taxon>
        <taxon>Pentapetalae</taxon>
        <taxon>asterids</taxon>
        <taxon>lamiids</taxon>
        <taxon>Solanales</taxon>
        <taxon>Solanaceae</taxon>
        <taxon>Solanoideae</taxon>
        <taxon>Solaneae</taxon>
        <taxon>Solanum</taxon>
    </lineage>
</organism>
<feature type="chain" id="PRO_0000277177" description="DNA-directed RNA polymerase subunit beta'">
    <location>
        <begin position="1"/>
        <end position="681"/>
    </location>
</feature>
<feature type="binding site" evidence="1">
    <location>
        <position position="69"/>
    </location>
    <ligand>
        <name>Zn(2+)</name>
        <dbReference type="ChEBI" id="CHEBI:29105"/>
    </ligand>
</feature>
<feature type="binding site" evidence="1">
    <location>
        <position position="71"/>
    </location>
    <ligand>
        <name>Zn(2+)</name>
        <dbReference type="ChEBI" id="CHEBI:29105"/>
    </ligand>
</feature>
<feature type="binding site" evidence="1">
    <location>
        <position position="87"/>
    </location>
    <ligand>
        <name>Zn(2+)</name>
        <dbReference type="ChEBI" id="CHEBI:29105"/>
    </ligand>
</feature>
<feature type="binding site" evidence="1">
    <location>
        <position position="90"/>
    </location>
    <ligand>
        <name>Zn(2+)</name>
        <dbReference type="ChEBI" id="CHEBI:29105"/>
    </ligand>
</feature>
<feature type="binding site" evidence="1">
    <location>
        <position position="489"/>
    </location>
    <ligand>
        <name>Mg(2+)</name>
        <dbReference type="ChEBI" id="CHEBI:18420"/>
    </ligand>
</feature>
<feature type="binding site" evidence="1">
    <location>
        <position position="491"/>
    </location>
    <ligand>
        <name>Mg(2+)</name>
        <dbReference type="ChEBI" id="CHEBI:18420"/>
    </ligand>
</feature>
<feature type="binding site" evidence="1">
    <location>
        <position position="493"/>
    </location>
    <ligand>
        <name>Mg(2+)</name>
        <dbReference type="ChEBI" id="CHEBI:18420"/>
    </ligand>
</feature>
<sequence>MIDRYKHQQLRIGSVSPQQISAWATKILPNGEIVGEVTKPYTFHYKTNKPEKDGLFCERIFGPIKSGICACGNYRVIGDEKEDPKFCEQCGVEFVDSRIRRYQMGYIKLACPVTHVWYLKRLPSYIANLLDKPLKELEGLVYCDFSFARPITKKPTFLRLRGLFEYEIQSWKYSIPLFFTTQGFDTFRNREISTGAGAIREQLADLDLRIIIENSLVEWEELGEEGHTGNEWEDRKVGRRKDFLVRRVELAKHFIRTNIEPEWMVLCLLPVLPPELRPIIQIDGGKLMSSDINELYRRVIYRNNTLTDLLTTSRSTPGELVMCQEKLVQEAVDTLLDNGIRGQPMRDGHNKVYKSFSDVIEGKEGRFRETLLGKRVDYSGRSVIVVGPSLSLHRCGLPREIAIELFQTFVIRGLIRQHLASNIGVAKSKIREKEPIVWEILQEVMQGHPVLLNRAPTLHRLGIQAFQPVLVEGRAICLHPLVCKGFNADFDGDQMAVHVPLSLEAQVEARLLMFSHMNLLSPAIGDPISVPTQDMLIGLYVLTSGNHRGICVNRYNPCNRRNYQNQKRSDNSYYKYTKEPFFSNSYDAIGAYRQKRINLDSPLWLRWRLDQRVIASRETPIEVHYESLGTFYEIYGHYLIVRSLKKKILFIYIRTTVGHIALYREIEEAIQGFSRAYSYAT</sequence>
<protein>
    <recommendedName>
        <fullName evidence="1">DNA-directed RNA polymerase subunit beta'</fullName>
        <ecNumber evidence="1">2.7.7.6</ecNumber>
    </recommendedName>
    <alternativeName>
        <fullName evidence="1">PEP</fullName>
    </alternativeName>
    <alternativeName>
        <fullName evidence="1">Plastid-encoded RNA polymerase subunit beta'</fullName>
        <shortName evidence="1">RNA polymerase subunit beta'</shortName>
    </alternativeName>
</protein>
<proteinExistence type="inferred from homology"/>
<comment type="function">
    <text evidence="1">DNA-dependent RNA polymerase catalyzes the transcription of DNA into RNA using the four ribonucleoside triphosphates as substrates.</text>
</comment>
<comment type="catalytic activity">
    <reaction evidence="1">
        <text>RNA(n) + a ribonucleoside 5'-triphosphate = RNA(n+1) + diphosphate</text>
        <dbReference type="Rhea" id="RHEA:21248"/>
        <dbReference type="Rhea" id="RHEA-COMP:14527"/>
        <dbReference type="Rhea" id="RHEA-COMP:17342"/>
        <dbReference type="ChEBI" id="CHEBI:33019"/>
        <dbReference type="ChEBI" id="CHEBI:61557"/>
        <dbReference type="ChEBI" id="CHEBI:140395"/>
        <dbReference type="EC" id="2.7.7.6"/>
    </reaction>
</comment>
<comment type="cofactor">
    <cofactor evidence="1">
        <name>Mg(2+)</name>
        <dbReference type="ChEBI" id="CHEBI:18420"/>
    </cofactor>
    <text evidence="1">Binds 1 Mg(2+) ion per subunit.</text>
</comment>
<comment type="cofactor">
    <cofactor evidence="1">
        <name>Zn(2+)</name>
        <dbReference type="ChEBI" id="CHEBI:29105"/>
    </cofactor>
    <text evidence="1">Binds 1 Zn(2+) ion per subunit.</text>
</comment>
<comment type="subunit">
    <text evidence="1">In plastids the minimal PEP RNA polymerase catalytic core is composed of four subunits: alpha, beta, beta', and beta''. When a (nuclear-encoded) sigma factor is associated with the core the holoenzyme is formed, which can initiate transcription.</text>
</comment>
<comment type="subcellular location">
    <subcellularLocation>
        <location evidence="1">Plastid</location>
        <location evidence="1">Chloroplast</location>
    </subcellularLocation>
</comment>
<comment type="similarity">
    <text evidence="1">Belongs to the RNA polymerase beta' chain family. RpoC1 subfamily.</text>
</comment>
<comment type="sequence caution" evidence="2">
    <conflict type="erroneous initiation">
        <sequence resource="EMBL-CDS" id="ABC56204"/>
    </conflict>
    <text>Extended N-terminus.</text>
</comment>
<name>RPOC1_SOLBU</name>
<accession>Q2MIJ6</accession>
<reference key="1">
    <citation type="journal article" date="2006" name="Theor. Appl. Genet.">
        <title>Complete chloroplast genome sequences of Solanum bulbocastanum, Solanum lycopersicum and comparative analyses with other Solanaceae genomes.</title>
        <authorList>
            <person name="Daniell H."/>
            <person name="Lee S.-B."/>
            <person name="Grevich J."/>
            <person name="Saski C."/>
            <person name="Quesada-Vargas T."/>
            <person name="Guda C."/>
            <person name="Tomkins J."/>
            <person name="Jansen R.K."/>
        </authorList>
    </citation>
    <scope>NUCLEOTIDE SEQUENCE [LARGE SCALE GENOMIC DNA]</scope>
    <source>
        <strain>cv. PT29</strain>
    </source>
</reference>
<evidence type="ECO:0000255" key="1">
    <source>
        <dbReference type="HAMAP-Rule" id="MF_01323"/>
    </source>
</evidence>
<evidence type="ECO:0000305" key="2"/>
<keyword id="KW-0150">Chloroplast</keyword>
<keyword id="KW-0240">DNA-directed RNA polymerase</keyword>
<keyword id="KW-0460">Magnesium</keyword>
<keyword id="KW-0479">Metal-binding</keyword>
<keyword id="KW-0548">Nucleotidyltransferase</keyword>
<keyword id="KW-0934">Plastid</keyword>
<keyword id="KW-0804">Transcription</keyword>
<keyword id="KW-0808">Transferase</keyword>
<keyword id="KW-0862">Zinc</keyword>
<gene>
    <name evidence="1" type="primary">rpoC1</name>
</gene>